<sequence>MVIRGVGIDIVSMSRFEKVYAKHGQRFIAEFFAEEEQSMPLASLAARFAAKEAVKKALNTPSILFKNIVIGSPAREAKIVGQEIQGRVWVSISHEKDNAVAIAIWEAD</sequence>
<gene>
    <name evidence="1" type="primary">acpS</name>
    <name type="ordered locus">COPRO5265_0691</name>
</gene>
<dbReference type="EC" id="2.7.8.7" evidence="1"/>
<dbReference type="EMBL" id="CP001145">
    <property type="protein sequence ID" value="ACI17334.1"/>
    <property type="molecule type" value="Genomic_DNA"/>
</dbReference>
<dbReference type="SMR" id="B5Y8E2"/>
<dbReference type="STRING" id="309798.COPRO5265_0691"/>
<dbReference type="KEGG" id="cpo:COPRO5265_0691"/>
<dbReference type="eggNOG" id="COG0736">
    <property type="taxonomic scope" value="Bacteria"/>
</dbReference>
<dbReference type="OrthoDB" id="517356at2"/>
<dbReference type="Proteomes" id="UP000001732">
    <property type="component" value="Chromosome"/>
</dbReference>
<dbReference type="GO" id="GO:0005737">
    <property type="term" value="C:cytoplasm"/>
    <property type="evidence" value="ECO:0007669"/>
    <property type="project" value="UniProtKB-SubCell"/>
</dbReference>
<dbReference type="GO" id="GO:0008897">
    <property type="term" value="F:holo-[acyl-carrier-protein] synthase activity"/>
    <property type="evidence" value="ECO:0007669"/>
    <property type="project" value="UniProtKB-UniRule"/>
</dbReference>
<dbReference type="GO" id="GO:0000287">
    <property type="term" value="F:magnesium ion binding"/>
    <property type="evidence" value="ECO:0007669"/>
    <property type="project" value="UniProtKB-UniRule"/>
</dbReference>
<dbReference type="GO" id="GO:0006633">
    <property type="term" value="P:fatty acid biosynthetic process"/>
    <property type="evidence" value="ECO:0007669"/>
    <property type="project" value="UniProtKB-UniRule"/>
</dbReference>
<dbReference type="Gene3D" id="3.90.470.20">
    <property type="entry name" value="4'-phosphopantetheinyl transferase domain"/>
    <property type="match status" value="1"/>
</dbReference>
<dbReference type="HAMAP" id="MF_00101">
    <property type="entry name" value="AcpS"/>
    <property type="match status" value="1"/>
</dbReference>
<dbReference type="InterPro" id="IPR008278">
    <property type="entry name" value="4-PPantetheinyl_Trfase_dom"/>
</dbReference>
<dbReference type="InterPro" id="IPR037143">
    <property type="entry name" value="4-PPantetheinyl_Trfase_dom_sf"/>
</dbReference>
<dbReference type="InterPro" id="IPR002582">
    <property type="entry name" value="ACPS"/>
</dbReference>
<dbReference type="Pfam" id="PF01648">
    <property type="entry name" value="ACPS"/>
    <property type="match status" value="1"/>
</dbReference>
<dbReference type="SUPFAM" id="SSF56214">
    <property type="entry name" value="4'-phosphopantetheinyl transferase"/>
    <property type="match status" value="1"/>
</dbReference>
<reference key="1">
    <citation type="submission" date="2008-08" db="EMBL/GenBank/DDBJ databases">
        <title>The complete genome sequence of Coprothermobacter proteolyticus strain ATCC 5245 / DSM 5265 / BT.</title>
        <authorList>
            <person name="Dodson R.J."/>
            <person name="Durkin A.S."/>
            <person name="Wu M."/>
            <person name="Eisen J."/>
            <person name="Sutton G."/>
        </authorList>
    </citation>
    <scope>NUCLEOTIDE SEQUENCE [LARGE SCALE GENOMIC DNA]</scope>
    <source>
        <strain>ATCC 35245 / DSM 5265 / OCM 4 / BT</strain>
    </source>
</reference>
<keyword id="KW-0963">Cytoplasm</keyword>
<keyword id="KW-0275">Fatty acid biosynthesis</keyword>
<keyword id="KW-0276">Fatty acid metabolism</keyword>
<keyword id="KW-0444">Lipid biosynthesis</keyword>
<keyword id="KW-0443">Lipid metabolism</keyword>
<keyword id="KW-0460">Magnesium</keyword>
<keyword id="KW-0479">Metal-binding</keyword>
<keyword id="KW-1185">Reference proteome</keyword>
<keyword id="KW-0808">Transferase</keyword>
<name>ACPS_COPPD</name>
<organism>
    <name type="scientific">Coprothermobacter proteolyticus (strain ATCC 35245 / DSM 5265 / OCM 4 / BT)</name>
    <dbReference type="NCBI Taxonomy" id="309798"/>
    <lineage>
        <taxon>Bacteria</taxon>
        <taxon>Pseudomonadati</taxon>
        <taxon>Coprothermobacterota</taxon>
        <taxon>Coprothermobacteria</taxon>
        <taxon>Coprothermobacterales</taxon>
        <taxon>Coprothermobacteraceae</taxon>
        <taxon>Coprothermobacter</taxon>
    </lineage>
</organism>
<feature type="chain" id="PRO_1000093871" description="Holo-[acyl-carrier-protein] synthase">
    <location>
        <begin position="1"/>
        <end position="108"/>
    </location>
</feature>
<feature type="binding site" evidence="1">
    <location>
        <position position="9"/>
    </location>
    <ligand>
        <name>Mg(2+)</name>
        <dbReference type="ChEBI" id="CHEBI:18420"/>
    </ligand>
</feature>
<feature type="binding site" evidence="1">
    <location>
        <position position="52"/>
    </location>
    <ligand>
        <name>Mg(2+)</name>
        <dbReference type="ChEBI" id="CHEBI:18420"/>
    </ligand>
</feature>
<protein>
    <recommendedName>
        <fullName evidence="1">Holo-[acyl-carrier-protein] synthase</fullName>
        <shortName evidence="1">Holo-ACP synthase</shortName>
        <ecNumber evidence="1">2.7.8.7</ecNumber>
    </recommendedName>
    <alternativeName>
        <fullName evidence="1">4'-phosphopantetheinyl transferase AcpS</fullName>
    </alternativeName>
</protein>
<proteinExistence type="inferred from homology"/>
<accession>B5Y8E2</accession>
<evidence type="ECO:0000255" key="1">
    <source>
        <dbReference type="HAMAP-Rule" id="MF_00101"/>
    </source>
</evidence>
<comment type="function">
    <text evidence="1">Transfers the 4'-phosphopantetheine moiety from coenzyme A to a Ser of acyl-carrier-protein.</text>
</comment>
<comment type="catalytic activity">
    <reaction evidence="1">
        <text>apo-[ACP] + CoA = holo-[ACP] + adenosine 3',5'-bisphosphate + H(+)</text>
        <dbReference type="Rhea" id="RHEA:12068"/>
        <dbReference type="Rhea" id="RHEA-COMP:9685"/>
        <dbReference type="Rhea" id="RHEA-COMP:9690"/>
        <dbReference type="ChEBI" id="CHEBI:15378"/>
        <dbReference type="ChEBI" id="CHEBI:29999"/>
        <dbReference type="ChEBI" id="CHEBI:57287"/>
        <dbReference type="ChEBI" id="CHEBI:58343"/>
        <dbReference type="ChEBI" id="CHEBI:64479"/>
        <dbReference type="EC" id="2.7.8.7"/>
    </reaction>
</comment>
<comment type="cofactor">
    <cofactor evidence="1">
        <name>Mg(2+)</name>
        <dbReference type="ChEBI" id="CHEBI:18420"/>
    </cofactor>
</comment>
<comment type="subcellular location">
    <subcellularLocation>
        <location evidence="1">Cytoplasm</location>
    </subcellularLocation>
</comment>
<comment type="similarity">
    <text evidence="1">Belongs to the P-Pant transferase superfamily. AcpS family.</text>
</comment>